<keyword id="KW-0066">ATP synthesis</keyword>
<keyword id="KW-0997">Cell inner membrane</keyword>
<keyword id="KW-1003">Cell membrane</keyword>
<keyword id="KW-0139">CF(1)</keyword>
<keyword id="KW-0375">Hydrogen ion transport</keyword>
<keyword id="KW-0406">Ion transport</keyword>
<keyword id="KW-0472">Membrane</keyword>
<keyword id="KW-0813">Transport</keyword>
<reference key="1">
    <citation type="submission" date="2007-07" db="EMBL/GenBank/DDBJ databases">
        <title>Complete genome sequence of Campylobacter jejuni subsp doylei 269.97 isolated from human blood.</title>
        <authorList>
            <person name="Fouts D.E."/>
            <person name="Mongodin E.F."/>
            <person name="Puiu D."/>
            <person name="Sebastian Y."/>
            <person name="Miller W.G."/>
            <person name="Mandrell R.E."/>
            <person name="Lastovica A.J."/>
            <person name="Nelson K.E."/>
        </authorList>
    </citation>
    <scope>NUCLEOTIDE SEQUENCE [LARGE SCALE GENOMIC DNA]</scope>
    <source>
        <strain>ATCC BAA-1458 / RM4099 / 269.97</strain>
    </source>
</reference>
<dbReference type="EMBL" id="CP000768">
    <property type="protein sequence ID" value="ABS43595.1"/>
    <property type="molecule type" value="Genomic_DNA"/>
</dbReference>
<dbReference type="SMR" id="A7H1I2"/>
<dbReference type="KEGG" id="cjd:JJD26997_0115"/>
<dbReference type="HOGENOM" id="CLU_084338_2_1_7"/>
<dbReference type="Proteomes" id="UP000002302">
    <property type="component" value="Chromosome"/>
</dbReference>
<dbReference type="GO" id="GO:0005886">
    <property type="term" value="C:plasma membrane"/>
    <property type="evidence" value="ECO:0007669"/>
    <property type="project" value="UniProtKB-SubCell"/>
</dbReference>
<dbReference type="GO" id="GO:0045259">
    <property type="term" value="C:proton-transporting ATP synthase complex"/>
    <property type="evidence" value="ECO:0007669"/>
    <property type="project" value="UniProtKB-KW"/>
</dbReference>
<dbReference type="GO" id="GO:0005524">
    <property type="term" value="F:ATP binding"/>
    <property type="evidence" value="ECO:0007669"/>
    <property type="project" value="UniProtKB-UniRule"/>
</dbReference>
<dbReference type="GO" id="GO:0046933">
    <property type="term" value="F:proton-transporting ATP synthase activity, rotational mechanism"/>
    <property type="evidence" value="ECO:0007669"/>
    <property type="project" value="UniProtKB-UniRule"/>
</dbReference>
<dbReference type="CDD" id="cd12152">
    <property type="entry name" value="F1-ATPase_delta"/>
    <property type="match status" value="1"/>
</dbReference>
<dbReference type="Gene3D" id="2.60.15.10">
    <property type="entry name" value="F0F1 ATP synthase delta/epsilon subunit, N-terminal"/>
    <property type="match status" value="1"/>
</dbReference>
<dbReference type="HAMAP" id="MF_00530">
    <property type="entry name" value="ATP_synth_epsil_bac"/>
    <property type="match status" value="1"/>
</dbReference>
<dbReference type="InterPro" id="IPR001469">
    <property type="entry name" value="ATP_synth_F1_dsu/esu"/>
</dbReference>
<dbReference type="InterPro" id="IPR020546">
    <property type="entry name" value="ATP_synth_F1_dsu/esu_N"/>
</dbReference>
<dbReference type="InterPro" id="IPR036771">
    <property type="entry name" value="ATPsynth_dsu/esu_N"/>
</dbReference>
<dbReference type="NCBIfam" id="TIGR01216">
    <property type="entry name" value="ATP_synt_epsi"/>
    <property type="match status" value="1"/>
</dbReference>
<dbReference type="PANTHER" id="PTHR13822">
    <property type="entry name" value="ATP SYNTHASE DELTA/EPSILON CHAIN"/>
    <property type="match status" value="1"/>
</dbReference>
<dbReference type="PANTHER" id="PTHR13822:SF10">
    <property type="entry name" value="ATP SYNTHASE EPSILON CHAIN, CHLOROPLASTIC"/>
    <property type="match status" value="1"/>
</dbReference>
<dbReference type="Pfam" id="PF02823">
    <property type="entry name" value="ATP-synt_DE_N"/>
    <property type="match status" value="1"/>
</dbReference>
<dbReference type="SUPFAM" id="SSF51344">
    <property type="entry name" value="Epsilon subunit of F1F0-ATP synthase N-terminal domain"/>
    <property type="match status" value="1"/>
</dbReference>
<proteinExistence type="inferred from homology"/>
<accession>A7H1I2</accession>
<comment type="function">
    <text evidence="1">Produces ATP from ADP in the presence of a proton gradient across the membrane.</text>
</comment>
<comment type="subunit">
    <text evidence="1">F-type ATPases have 2 components, CF(1) - the catalytic core - and CF(0) - the membrane proton channel. CF(1) has five subunits: alpha(3), beta(3), gamma(1), delta(1), epsilon(1). CF(0) has three main subunits: a, b and c.</text>
</comment>
<comment type="subcellular location">
    <subcellularLocation>
        <location evidence="1">Cell inner membrane</location>
        <topology evidence="1">Peripheral membrane protein</topology>
    </subcellularLocation>
</comment>
<comment type="similarity">
    <text evidence="1">Belongs to the ATPase epsilon chain family.</text>
</comment>
<protein>
    <recommendedName>
        <fullName evidence="1">ATP synthase epsilon chain</fullName>
    </recommendedName>
    <alternativeName>
        <fullName evidence="1">ATP synthase F1 sector epsilon subunit</fullName>
    </alternativeName>
    <alternativeName>
        <fullName evidence="1">F-ATPase epsilon subunit</fullName>
    </alternativeName>
</protein>
<gene>
    <name evidence="1" type="primary">atpC</name>
    <name type="ordered locus">JJD26997_0115</name>
</gene>
<evidence type="ECO:0000255" key="1">
    <source>
        <dbReference type="HAMAP-Rule" id="MF_00530"/>
    </source>
</evidence>
<name>ATPE_CAMJD</name>
<organism>
    <name type="scientific">Campylobacter jejuni subsp. doylei (strain ATCC BAA-1458 / RM4099 / 269.97)</name>
    <dbReference type="NCBI Taxonomy" id="360109"/>
    <lineage>
        <taxon>Bacteria</taxon>
        <taxon>Pseudomonadati</taxon>
        <taxon>Campylobacterota</taxon>
        <taxon>Epsilonproteobacteria</taxon>
        <taxon>Campylobacterales</taxon>
        <taxon>Campylobacteraceae</taxon>
        <taxon>Campylobacter</taxon>
    </lineage>
</organism>
<sequence length="129" mass="13733">MQDLISLEIVTPLGMIYQGEVKSVTLPGSEGEFGVLRGHASLVASLKSGVIDIEKADLNHELIAIDAGHAKVDEDKICVLAKGAVWVCGSDESEIEKNLAQAKDLIKSMSSDNAALAVTFSKLDNARMH</sequence>
<feature type="chain" id="PRO_1000056470" description="ATP synthase epsilon chain">
    <location>
        <begin position="1"/>
        <end position="129"/>
    </location>
</feature>